<feature type="chain" id="PRO_0000064194" description="Peptidyl-prolyl cis-trans isomerase 7">
    <location>
        <begin position="1"/>
        <end position="171"/>
    </location>
</feature>
<feature type="domain" description="PPIase cyclophilin-type" evidence="1">
    <location>
        <begin position="7"/>
        <end position="170"/>
    </location>
</feature>
<feature type="sequence conflict" description="In Ref. 1; AAC47125." evidence="2" ref="1">
    <original>I</original>
    <variation>T</variation>
    <location>
        <position position="12"/>
    </location>
</feature>
<evidence type="ECO:0000255" key="1">
    <source>
        <dbReference type="PROSITE-ProRule" id="PRU00156"/>
    </source>
</evidence>
<evidence type="ECO:0000305" key="2"/>
<accession>P52015</accession>
<reference key="1">
    <citation type="journal article" date="1996" name="Biochem. J.">
        <title>Cloning and biochemical characterization of the cyclophilin homologues from the free-living nematode Caenorhabditis elegans.</title>
        <authorList>
            <person name="Page A.P."/>
            <person name="Macniven K."/>
            <person name="Hengartner M.O."/>
        </authorList>
    </citation>
    <scope>NUCLEOTIDE SEQUENCE [MRNA]</scope>
    <source>
        <strain>Bristol N2</strain>
    </source>
</reference>
<reference key="2">
    <citation type="journal article" date="1998" name="Science">
        <title>Genome sequence of the nematode C. elegans: a platform for investigating biology.</title>
        <authorList>
            <consortium name="The C. elegans sequencing consortium"/>
        </authorList>
    </citation>
    <scope>NUCLEOTIDE SEQUENCE [LARGE SCALE GENOMIC DNA]</scope>
    <source>
        <strain>Bristol N2</strain>
    </source>
</reference>
<reference key="3">
    <citation type="journal article" date="1997" name="Electrophoresis">
        <title>Two-dimensional gel electrophoresis of Caenorhabditis elegans homogenates and identification of protein spots by microsequencing.</title>
        <authorList>
            <person name="Bini L."/>
            <person name="Heid H."/>
            <person name="Liberatori S."/>
            <person name="Geier G."/>
            <person name="Pallini V."/>
            <person name="Zwilling R."/>
        </authorList>
    </citation>
    <scope>PROTEIN SEQUENCE OF 1-13</scope>
    <source>
        <strain>Bristol N2</strain>
    </source>
</reference>
<keyword id="KW-0903">Direct protein sequencing</keyword>
<keyword id="KW-0413">Isomerase</keyword>
<keyword id="KW-1185">Reference proteome</keyword>
<keyword id="KW-0697">Rotamase</keyword>
<protein>
    <recommendedName>
        <fullName>Peptidyl-prolyl cis-trans isomerase 7</fullName>
        <shortName>PPIase 7</shortName>
        <ecNumber>5.2.1.8</ecNumber>
    </recommendedName>
    <alternativeName>
        <fullName>Cyclophilin-7</fullName>
    </alternativeName>
    <alternativeName>
        <fullName>Rotamase 7</fullName>
    </alternativeName>
</protein>
<proteinExistence type="evidence at protein level"/>
<sequence>MSRPRVFFDITIAGKPTGRIVMELYNDIVPKTAENFRALCTGEKGVGKSGKPLHFKGSKFHRIIPEFMIQGGDFTRGNGTGGESIYGEKFPDENFKEKHTGPGVLSMANAGPNTNGSQFFLCTVKTAWLDGKHVVFGRVVEGLDIVSKVEGNGSSSGTPKSECLIADCGQL</sequence>
<comment type="function">
    <text>PPIases accelerate the folding of proteins. It catalyzes the cis-trans isomerization of proline imidic peptide bonds in oligopeptides.</text>
</comment>
<comment type="catalytic activity">
    <reaction>
        <text>[protein]-peptidylproline (omega=180) = [protein]-peptidylproline (omega=0)</text>
        <dbReference type="Rhea" id="RHEA:16237"/>
        <dbReference type="Rhea" id="RHEA-COMP:10747"/>
        <dbReference type="Rhea" id="RHEA-COMP:10748"/>
        <dbReference type="ChEBI" id="CHEBI:83833"/>
        <dbReference type="ChEBI" id="CHEBI:83834"/>
        <dbReference type="EC" id="5.2.1.8"/>
    </reaction>
</comment>
<comment type="similarity">
    <text evidence="2">Belongs to the cyclophilin-type PPIase family.</text>
</comment>
<organism>
    <name type="scientific">Caenorhabditis elegans</name>
    <dbReference type="NCBI Taxonomy" id="6239"/>
    <lineage>
        <taxon>Eukaryota</taxon>
        <taxon>Metazoa</taxon>
        <taxon>Ecdysozoa</taxon>
        <taxon>Nematoda</taxon>
        <taxon>Chromadorea</taxon>
        <taxon>Rhabditida</taxon>
        <taxon>Rhabditina</taxon>
        <taxon>Rhabditomorpha</taxon>
        <taxon>Rhabditoidea</taxon>
        <taxon>Rhabditidae</taxon>
        <taxon>Peloderinae</taxon>
        <taxon>Caenorhabditis</taxon>
    </lineage>
</organism>
<dbReference type="EC" id="5.2.1.8"/>
<dbReference type="EMBL" id="U27559">
    <property type="protein sequence ID" value="AAC47125.1"/>
    <property type="molecule type" value="mRNA"/>
</dbReference>
<dbReference type="EMBL" id="AL032663">
    <property type="protein sequence ID" value="CAA21760.1"/>
    <property type="molecule type" value="Genomic_DNA"/>
</dbReference>
<dbReference type="PIR" id="T27371">
    <property type="entry name" value="T27371"/>
</dbReference>
<dbReference type="RefSeq" id="NP_506749.1">
    <property type="nucleotide sequence ID" value="NM_074348.11"/>
</dbReference>
<dbReference type="SMR" id="P52015"/>
<dbReference type="BioGRID" id="45022">
    <property type="interactions" value="61"/>
</dbReference>
<dbReference type="DIP" id="DIP-24704N"/>
<dbReference type="FunCoup" id="P52015">
    <property type="interactions" value="1404"/>
</dbReference>
<dbReference type="STRING" id="6239.Y75B12B.2.2"/>
<dbReference type="PaxDb" id="6239-Y75B12B.2.1"/>
<dbReference type="PeptideAtlas" id="P52015"/>
<dbReference type="EnsemblMetazoa" id="Y75B12B.2.1">
    <property type="protein sequence ID" value="Y75B12B.2.1"/>
    <property type="gene ID" value="WBGene00000883"/>
</dbReference>
<dbReference type="GeneID" id="180027"/>
<dbReference type="KEGG" id="cel:CELE_Y75B12B.2"/>
<dbReference type="UCSC" id="Y75B12B.2.1">
    <property type="organism name" value="c. elegans"/>
</dbReference>
<dbReference type="AGR" id="WB:WBGene00000883"/>
<dbReference type="CTD" id="180027"/>
<dbReference type="WormBase" id="Y75B12B.2">
    <property type="protein sequence ID" value="CE20371"/>
    <property type="gene ID" value="WBGene00000883"/>
    <property type="gene designation" value="cyn-7"/>
</dbReference>
<dbReference type="eggNOG" id="KOG0865">
    <property type="taxonomic scope" value="Eukaryota"/>
</dbReference>
<dbReference type="GeneTree" id="ENSGT00940000168914"/>
<dbReference type="HOGENOM" id="CLU_012062_4_2_1"/>
<dbReference type="InParanoid" id="P52015"/>
<dbReference type="OMA" id="FKSIVPR"/>
<dbReference type="OrthoDB" id="193499at2759"/>
<dbReference type="PhylomeDB" id="P52015"/>
<dbReference type="PRO" id="PR:P52015"/>
<dbReference type="Proteomes" id="UP000001940">
    <property type="component" value="Chromosome V"/>
</dbReference>
<dbReference type="Bgee" id="WBGene00000883">
    <property type="expression patterns" value="Expressed in adult organism and 4 other cell types or tissues"/>
</dbReference>
<dbReference type="GO" id="GO:0005737">
    <property type="term" value="C:cytoplasm"/>
    <property type="evidence" value="ECO:0000318"/>
    <property type="project" value="GO_Central"/>
</dbReference>
<dbReference type="GO" id="GO:0016018">
    <property type="term" value="F:cyclosporin A binding"/>
    <property type="evidence" value="ECO:0000318"/>
    <property type="project" value="GO_Central"/>
</dbReference>
<dbReference type="GO" id="GO:0003755">
    <property type="term" value="F:peptidyl-prolyl cis-trans isomerase activity"/>
    <property type="evidence" value="ECO:0000318"/>
    <property type="project" value="GO_Central"/>
</dbReference>
<dbReference type="GO" id="GO:0006457">
    <property type="term" value="P:protein folding"/>
    <property type="evidence" value="ECO:0000318"/>
    <property type="project" value="GO_Central"/>
</dbReference>
<dbReference type="CDD" id="cd01926">
    <property type="entry name" value="cyclophilin_ABH_like"/>
    <property type="match status" value="1"/>
</dbReference>
<dbReference type="FunFam" id="2.40.100.10:FF:000002">
    <property type="entry name" value="Peptidyl-prolyl cis-trans isomerase"/>
    <property type="match status" value="1"/>
</dbReference>
<dbReference type="Gene3D" id="2.40.100.10">
    <property type="entry name" value="Cyclophilin-like"/>
    <property type="match status" value="1"/>
</dbReference>
<dbReference type="InterPro" id="IPR029000">
    <property type="entry name" value="Cyclophilin-like_dom_sf"/>
</dbReference>
<dbReference type="InterPro" id="IPR024936">
    <property type="entry name" value="Cyclophilin-type_PPIase"/>
</dbReference>
<dbReference type="InterPro" id="IPR020892">
    <property type="entry name" value="Cyclophilin-type_PPIase_CS"/>
</dbReference>
<dbReference type="InterPro" id="IPR002130">
    <property type="entry name" value="Cyclophilin-type_PPIase_dom"/>
</dbReference>
<dbReference type="PANTHER" id="PTHR11071">
    <property type="entry name" value="PEPTIDYL-PROLYL CIS-TRANS ISOMERASE"/>
    <property type="match status" value="1"/>
</dbReference>
<dbReference type="PANTHER" id="PTHR11071:SF561">
    <property type="entry name" value="PEPTIDYL-PROLYL CIS-TRANS ISOMERASE D-RELATED"/>
    <property type="match status" value="1"/>
</dbReference>
<dbReference type="Pfam" id="PF00160">
    <property type="entry name" value="Pro_isomerase"/>
    <property type="match status" value="1"/>
</dbReference>
<dbReference type="PIRSF" id="PIRSF001467">
    <property type="entry name" value="Peptidylpro_ismrse"/>
    <property type="match status" value="1"/>
</dbReference>
<dbReference type="PRINTS" id="PR00153">
    <property type="entry name" value="CSAPPISMRASE"/>
</dbReference>
<dbReference type="SUPFAM" id="SSF50891">
    <property type="entry name" value="Cyclophilin-like"/>
    <property type="match status" value="1"/>
</dbReference>
<dbReference type="PROSITE" id="PS00170">
    <property type="entry name" value="CSA_PPIASE_1"/>
    <property type="match status" value="1"/>
</dbReference>
<dbReference type="PROSITE" id="PS50072">
    <property type="entry name" value="CSA_PPIASE_2"/>
    <property type="match status" value="1"/>
</dbReference>
<gene>
    <name type="primary">cyn-7</name>
    <name type="synonym">cyp-7</name>
    <name type="ORF">Y75B12B.2</name>
</gene>
<name>CYP7_CAEEL</name>